<accession>A9KGS6</accession>
<proteinExistence type="inferred from homology"/>
<feature type="chain" id="PRO_1000074143" description="UPF0758 protein CBUD_1789">
    <location>
        <begin position="1"/>
        <end position="224"/>
    </location>
</feature>
<feature type="domain" description="MPN" evidence="1">
    <location>
        <begin position="102"/>
        <end position="224"/>
    </location>
</feature>
<feature type="short sequence motif" description="JAMM motif" evidence="1">
    <location>
        <begin position="173"/>
        <end position="186"/>
    </location>
</feature>
<feature type="binding site" evidence="1">
    <location>
        <position position="173"/>
    </location>
    <ligand>
        <name>Zn(2+)</name>
        <dbReference type="ChEBI" id="CHEBI:29105"/>
        <note>catalytic</note>
    </ligand>
</feature>
<feature type="binding site" evidence="1">
    <location>
        <position position="175"/>
    </location>
    <ligand>
        <name>Zn(2+)</name>
        <dbReference type="ChEBI" id="CHEBI:29105"/>
        <note>catalytic</note>
    </ligand>
</feature>
<feature type="binding site" evidence="1">
    <location>
        <position position="186"/>
    </location>
    <ligand>
        <name>Zn(2+)</name>
        <dbReference type="ChEBI" id="CHEBI:29105"/>
        <note>catalytic</note>
    </ligand>
</feature>
<dbReference type="EMBL" id="CP000733">
    <property type="protein sequence ID" value="ABS77915.1"/>
    <property type="molecule type" value="Genomic_DNA"/>
</dbReference>
<dbReference type="SMR" id="A9KGS6"/>
<dbReference type="KEGG" id="cbd:CBUD_1789"/>
<dbReference type="HOGENOM" id="CLU_073529_0_2_6"/>
<dbReference type="Proteomes" id="UP000008555">
    <property type="component" value="Chromosome"/>
</dbReference>
<dbReference type="GO" id="GO:0046872">
    <property type="term" value="F:metal ion binding"/>
    <property type="evidence" value="ECO:0007669"/>
    <property type="project" value="UniProtKB-KW"/>
</dbReference>
<dbReference type="GO" id="GO:0008237">
    <property type="term" value="F:metallopeptidase activity"/>
    <property type="evidence" value="ECO:0007669"/>
    <property type="project" value="UniProtKB-KW"/>
</dbReference>
<dbReference type="GO" id="GO:0006508">
    <property type="term" value="P:proteolysis"/>
    <property type="evidence" value="ECO:0007669"/>
    <property type="project" value="UniProtKB-KW"/>
</dbReference>
<dbReference type="CDD" id="cd08071">
    <property type="entry name" value="MPN_DUF2466"/>
    <property type="match status" value="1"/>
</dbReference>
<dbReference type="Gene3D" id="3.40.140.10">
    <property type="entry name" value="Cytidine Deaminase, domain 2"/>
    <property type="match status" value="1"/>
</dbReference>
<dbReference type="InterPro" id="IPR037518">
    <property type="entry name" value="MPN"/>
</dbReference>
<dbReference type="InterPro" id="IPR025657">
    <property type="entry name" value="RadC_JAB"/>
</dbReference>
<dbReference type="InterPro" id="IPR010994">
    <property type="entry name" value="RuvA_2-like"/>
</dbReference>
<dbReference type="InterPro" id="IPR001405">
    <property type="entry name" value="UPF0758"/>
</dbReference>
<dbReference type="InterPro" id="IPR020891">
    <property type="entry name" value="UPF0758_CS"/>
</dbReference>
<dbReference type="InterPro" id="IPR046778">
    <property type="entry name" value="UPF0758_N"/>
</dbReference>
<dbReference type="NCBIfam" id="NF000642">
    <property type="entry name" value="PRK00024.1"/>
    <property type="match status" value="1"/>
</dbReference>
<dbReference type="NCBIfam" id="TIGR00608">
    <property type="entry name" value="radc"/>
    <property type="match status" value="1"/>
</dbReference>
<dbReference type="PANTHER" id="PTHR30471">
    <property type="entry name" value="DNA REPAIR PROTEIN RADC"/>
    <property type="match status" value="1"/>
</dbReference>
<dbReference type="PANTHER" id="PTHR30471:SF3">
    <property type="entry name" value="UPF0758 PROTEIN YEES-RELATED"/>
    <property type="match status" value="1"/>
</dbReference>
<dbReference type="Pfam" id="PF04002">
    <property type="entry name" value="RadC"/>
    <property type="match status" value="1"/>
</dbReference>
<dbReference type="Pfam" id="PF20582">
    <property type="entry name" value="UPF0758_N"/>
    <property type="match status" value="1"/>
</dbReference>
<dbReference type="SUPFAM" id="SSF102712">
    <property type="entry name" value="JAB1/MPN domain"/>
    <property type="match status" value="1"/>
</dbReference>
<dbReference type="SUPFAM" id="SSF47781">
    <property type="entry name" value="RuvA domain 2-like"/>
    <property type="match status" value="1"/>
</dbReference>
<dbReference type="PROSITE" id="PS50249">
    <property type="entry name" value="MPN"/>
    <property type="match status" value="1"/>
</dbReference>
<dbReference type="PROSITE" id="PS01302">
    <property type="entry name" value="UPF0758"/>
    <property type="match status" value="1"/>
</dbReference>
<protein>
    <recommendedName>
        <fullName>UPF0758 protein CBUD_1789</fullName>
    </recommendedName>
</protein>
<reference key="1">
    <citation type="journal article" date="2009" name="Infect. Immun.">
        <title>Comparative genomics reveal extensive transposon-mediated genomic plasticity and diversity among potential effector proteins within the genus Coxiella.</title>
        <authorList>
            <person name="Beare P.A."/>
            <person name="Unsworth N."/>
            <person name="Andoh M."/>
            <person name="Voth D.E."/>
            <person name="Omsland A."/>
            <person name="Gilk S.D."/>
            <person name="Williams K.P."/>
            <person name="Sobral B.W."/>
            <person name="Kupko J.J. III"/>
            <person name="Porcella S.F."/>
            <person name="Samuel J.E."/>
            <person name="Heinzen R.A."/>
        </authorList>
    </citation>
    <scope>NUCLEOTIDE SEQUENCE [LARGE SCALE GENOMIC DNA]</scope>
    <source>
        <strain>Dugway 5J108-111</strain>
    </source>
</reference>
<gene>
    <name type="ordered locus">CBUD_1789</name>
</gene>
<evidence type="ECO:0000255" key="1">
    <source>
        <dbReference type="PROSITE-ProRule" id="PRU01182"/>
    </source>
</evidence>
<evidence type="ECO:0000305" key="2"/>
<comment type="similarity">
    <text evidence="2">Belongs to the UPF0758 family.</text>
</comment>
<name>Y1789_COXBN</name>
<organism>
    <name type="scientific">Coxiella burnetii (strain Dugway 5J108-111)</name>
    <dbReference type="NCBI Taxonomy" id="434922"/>
    <lineage>
        <taxon>Bacteria</taxon>
        <taxon>Pseudomonadati</taxon>
        <taxon>Pseudomonadota</taxon>
        <taxon>Gammaproteobacteria</taxon>
        <taxon>Legionellales</taxon>
        <taxon>Coxiellaceae</taxon>
        <taxon>Coxiella</taxon>
    </lineage>
</organism>
<sequence length="224" mass="25193">MSITQWPTSERPREKLLREDAHILSDAELIAVIIQKGVRGCNAVELAREWLNHLGGLASLLNADFHRLSGLRGLGKAVYCKLKAAAELQRRYLRQSLERKGQLGCTQDAQQLLYAQLRHHESEVFACLFLDNRHRIIQFEKLFYGSINQASVHPREIIKRALYHNSAALIVAHNHPSGVPDPSQADRAATTHLKEALALIDVRLLDHIIIGDRNSFSFAESGLL</sequence>
<keyword id="KW-0378">Hydrolase</keyword>
<keyword id="KW-0479">Metal-binding</keyword>
<keyword id="KW-0482">Metalloprotease</keyword>
<keyword id="KW-0645">Protease</keyword>
<keyword id="KW-0862">Zinc</keyword>